<proteinExistence type="evidence at transcript level"/>
<feature type="chain" id="PRO_0000279451" description="Synaptic vesicle 2-related protein">
    <location>
        <begin position="1"/>
        <end position="548"/>
    </location>
</feature>
<feature type="topological domain" description="Cytoplasmic" evidence="2">
    <location>
        <begin position="1"/>
        <end position="87"/>
    </location>
</feature>
<feature type="transmembrane region" description="Helical" evidence="2">
    <location>
        <begin position="88"/>
        <end position="108"/>
    </location>
</feature>
<feature type="topological domain" description="Vesicular" evidence="2">
    <location>
        <begin position="109"/>
        <end position="122"/>
    </location>
</feature>
<feature type="transmembrane region" description="Helical" evidence="2">
    <location>
        <begin position="123"/>
        <end position="143"/>
    </location>
</feature>
<feature type="topological domain" description="Cytoplasmic" evidence="2">
    <location>
        <begin position="144"/>
        <end position="156"/>
    </location>
</feature>
<feature type="transmembrane region" description="Helical" evidence="2">
    <location>
        <begin position="157"/>
        <end position="177"/>
    </location>
</feature>
<feature type="topological domain" description="Vesicular" evidence="2">
    <location>
        <begin position="178"/>
        <end position="180"/>
    </location>
</feature>
<feature type="transmembrane region" description="Helical" evidence="2">
    <location>
        <begin position="181"/>
        <end position="201"/>
    </location>
</feature>
<feature type="topological domain" description="Cytoplasmic" evidence="2">
    <location>
        <begin position="202"/>
        <end position="209"/>
    </location>
</feature>
<feature type="transmembrane region" description="Helical" evidence="2">
    <location>
        <begin position="210"/>
        <end position="230"/>
    </location>
</feature>
<feature type="topological domain" description="Vesicular" evidence="2">
    <location>
        <begin position="231"/>
        <end position="238"/>
    </location>
</feature>
<feature type="transmembrane region" description="Helical" evidence="2">
    <location>
        <begin position="239"/>
        <end position="259"/>
    </location>
</feature>
<feature type="topological domain" description="Cytoplasmic" evidence="2">
    <location>
        <begin position="260"/>
        <end position="316"/>
    </location>
</feature>
<feature type="transmembrane region" description="Helical" evidence="2">
    <location>
        <begin position="317"/>
        <end position="337"/>
    </location>
</feature>
<feature type="topological domain" description="Vesicular" evidence="2">
    <location>
        <begin position="338"/>
        <end position="373"/>
    </location>
</feature>
<feature type="transmembrane region" description="Helical" evidence="2">
    <location>
        <begin position="374"/>
        <end position="394"/>
    </location>
</feature>
<feature type="topological domain" description="Cytoplasmic" evidence="2">
    <location>
        <begin position="395"/>
        <end position="401"/>
    </location>
</feature>
<feature type="transmembrane region" description="Helical" evidence="2">
    <location>
        <begin position="402"/>
        <end position="422"/>
    </location>
</feature>
<feature type="topological domain" description="Vesicular" evidence="2">
    <location>
        <begin position="423"/>
        <end position="425"/>
    </location>
</feature>
<feature type="transmembrane region" description="Helical" evidence="2">
    <location>
        <begin position="426"/>
        <end position="446"/>
    </location>
</feature>
<feature type="topological domain" description="Cytoplasmic" evidence="2">
    <location>
        <begin position="447"/>
        <end position="457"/>
    </location>
</feature>
<feature type="transmembrane region" description="Helical" evidence="2">
    <location>
        <begin position="458"/>
        <end position="478"/>
    </location>
</feature>
<feature type="topological domain" description="Vesicular" evidence="2">
    <location>
        <begin position="479"/>
        <end position="489"/>
    </location>
</feature>
<feature type="transmembrane region" description="Helical" evidence="2">
    <location>
        <begin position="490"/>
        <end position="510"/>
    </location>
</feature>
<feature type="topological domain" description="Cytoplasmic" evidence="2">
    <location>
        <begin position="511"/>
        <end position="548"/>
    </location>
</feature>
<feature type="region of interest" description="Disordered" evidence="3">
    <location>
        <begin position="528"/>
        <end position="548"/>
    </location>
</feature>
<feature type="modified residue" description="Phosphoserine" evidence="1">
    <location>
        <position position="25"/>
    </location>
</feature>
<feature type="modified residue" description="Phosphoserine" evidence="1">
    <location>
        <position position="31"/>
    </location>
</feature>
<feature type="modified residue" description="Phosphoserine" evidence="1">
    <location>
        <position position="542"/>
    </location>
</feature>
<feature type="splice variant" id="VSP_023442" description="In isoform 2." evidence="5">
    <original>VYPTATRALGLGTCSGMA</original>
    <variation>LRSAQLSRALTLSHHPKS</variation>
    <location>
        <begin position="451"/>
        <end position="468"/>
    </location>
</feature>
<feature type="splice variant" id="VSP_023443" description="In isoform 2." evidence="5">
    <location>
        <begin position="469"/>
        <end position="548"/>
    </location>
</feature>
<gene>
    <name type="primary">SVOP</name>
</gene>
<comment type="subcellular location">
    <subcellularLocation>
        <location evidence="4">Cytoplasmic vesicle</location>
        <location evidence="4">Secretory vesicle</location>
        <location evidence="4">Synaptic vesicle membrane</location>
        <topology evidence="4">Multi-pass membrane protein</topology>
    </subcellularLocation>
</comment>
<comment type="alternative products">
    <event type="alternative splicing"/>
    <isoform>
        <id>Q1JP63-1</id>
        <name>1</name>
        <sequence type="displayed"/>
    </isoform>
    <isoform>
        <id>Q1JP63-2</id>
        <name>2</name>
        <sequence type="described" ref="VSP_023442 VSP_023443"/>
    </isoform>
</comment>
<comment type="tissue specificity">
    <text evidence="4">Detected in brain and adrenal medulla.</text>
</comment>
<comment type="similarity">
    <text evidence="6">Belongs to the major facilitator superfamily.</text>
</comment>
<organism>
    <name type="scientific">Bos taurus</name>
    <name type="common">Bovine</name>
    <dbReference type="NCBI Taxonomy" id="9913"/>
    <lineage>
        <taxon>Eukaryota</taxon>
        <taxon>Metazoa</taxon>
        <taxon>Chordata</taxon>
        <taxon>Craniata</taxon>
        <taxon>Vertebrata</taxon>
        <taxon>Euteleostomi</taxon>
        <taxon>Mammalia</taxon>
        <taxon>Eutheria</taxon>
        <taxon>Laurasiatheria</taxon>
        <taxon>Artiodactyla</taxon>
        <taxon>Ruminantia</taxon>
        <taxon>Pecora</taxon>
        <taxon>Bovidae</taxon>
        <taxon>Bovinae</taxon>
        <taxon>Bos</taxon>
    </lineage>
</organism>
<evidence type="ECO:0000250" key="1">
    <source>
        <dbReference type="UniProtKB" id="Q8BFT9"/>
    </source>
</evidence>
<evidence type="ECO:0000255" key="2"/>
<evidence type="ECO:0000256" key="3">
    <source>
        <dbReference type="SAM" id="MobiDB-lite"/>
    </source>
</evidence>
<evidence type="ECO:0000269" key="4">
    <source>
    </source>
</evidence>
<evidence type="ECO:0000303" key="5">
    <source ref="2"/>
</evidence>
<evidence type="ECO:0000305" key="6"/>
<keyword id="KW-0025">Alternative splicing</keyword>
<keyword id="KW-0968">Cytoplasmic vesicle</keyword>
<keyword id="KW-0472">Membrane</keyword>
<keyword id="KW-0597">Phosphoprotein</keyword>
<keyword id="KW-1185">Reference proteome</keyword>
<keyword id="KW-0770">Synapse</keyword>
<keyword id="KW-0812">Transmembrane</keyword>
<keyword id="KW-1133">Transmembrane helix</keyword>
<keyword id="KW-0813">Transport</keyword>
<name>SVOP_BOVIN</name>
<protein>
    <recommendedName>
        <fullName>Synaptic vesicle 2-related protein</fullName>
        <shortName>SV2-related protein</shortName>
    </recommendedName>
</protein>
<sequence>MEEDLFQLRQLPVVKFRRTGESARSEDDTASGEHEVQIEGVRAGLEAVELDDGAAVPKEFANPTDDTFMVEDAVEAIGFGKFQWKLSVLTGLAWMADAMEMMILSILAPQLHCEWRLPSWQVALLTSVVFVGMMSSSTLWGNISDQYGRKTGLKISVLWTLYYGILSAFAPVYSWILVLRGLVGFGIGGVPQSVTLYAEFLPMKARAKCILLIEVFWAIGTVFEVVLAVFVMPSLGWRWLLILSAVPLLLFAVLCFWLPESARYDVLSGNQEKAIATLKRIATENGAPMPLGKLIISRQEDRGKMRDLFTPHFRWTTLLLWFIWFSNAFSYYGLVLLTTELFQAGDVCSISSRKKAVEAKCSLACEYLSEEDYMDLLWTTLSEFPGVLVTLWIIDRLGRKKTMALCFVVFSFCSLLLFICVGRNMLTLLLFIARAFISGGFQAAYVYTPEVYPTATRALGLGTCSGMARVGALITPFIAQVMLESSVYLTLAVYSGCCLLAALASCFLPIETKGRGLQESSHREWGQEMVGRGAHGTGVARSNSGSQE</sequence>
<accession>Q1JP63</accession>
<accession>Q17QM3</accession>
<reference key="1">
    <citation type="journal article" date="2005" name="BMC Genomics">
        <title>Characterization of 954 bovine full-CDS cDNA sequences.</title>
        <authorList>
            <person name="Harhay G.P."/>
            <person name="Sonstegard T.S."/>
            <person name="Keele J.W."/>
            <person name="Heaton M.P."/>
            <person name="Clawson M.L."/>
            <person name="Snelling W.M."/>
            <person name="Wiedmann R.T."/>
            <person name="Van Tassell C.P."/>
            <person name="Smith T.P.L."/>
        </authorList>
    </citation>
    <scope>NUCLEOTIDE SEQUENCE [LARGE SCALE MRNA] (ISOFORM 1)</scope>
</reference>
<reference key="2">
    <citation type="submission" date="2006-06" db="EMBL/GenBank/DDBJ databases">
        <authorList>
            <consortium name="NIH - Mammalian Gene Collection (MGC) project"/>
        </authorList>
    </citation>
    <scope>NUCLEOTIDE SEQUENCE [LARGE SCALE MRNA] (ISOFORM 2)</scope>
    <source>
        <strain>Hereford</strain>
        <tissue>Brain cortex</tissue>
    </source>
</reference>
<reference key="3">
    <citation type="journal article" date="1998" name="J. Neurosci.">
        <title>SVOP, an evolutionarily conserved synaptic vesicle protein, suggests novel transport functions of synaptic vesicles.</title>
        <authorList>
            <person name="Janz R."/>
            <person name="Hofmann K."/>
            <person name="Suedhof T.C."/>
        </authorList>
    </citation>
    <scope>SUBCELLULAR LOCATION</scope>
    <scope>TISSUE SPECIFICITY</scope>
</reference>
<dbReference type="EMBL" id="BT025491">
    <property type="protein sequence ID" value="ABF57447.1"/>
    <property type="molecule type" value="mRNA"/>
</dbReference>
<dbReference type="EMBL" id="BC118274">
    <property type="protein sequence ID" value="AAI18275.1"/>
    <property type="molecule type" value="mRNA"/>
</dbReference>
<dbReference type="RefSeq" id="NP_001068909.1">
    <molecule id="Q1JP63-1"/>
    <property type="nucleotide sequence ID" value="NM_001075441.1"/>
</dbReference>
<dbReference type="SMR" id="Q1JP63"/>
<dbReference type="FunCoup" id="Q1JP63">
    <property type="interactions" value="752"/>
</dbReference>
<dbReference type="STRING" id="9913.ENSBTAP00000029564"/>
<dbReference type="PaxDb" id="9913-ENSBTAP00000029564"/>
<dbReference type="Ensembl" id="ENSBTAT00000025070.7">
    <molecule id="Q1JP63-2"/>
    <property type="protein sequence ID" value="ENSBTAP00000025070.7"/>
    <property type="gene ID" value="ENSBTAG00000018833.7"/>
</dbReference>
<dbReference type="Ensembl" id="ENSBTAT00000029565.3">
    <molecule id="Q1JP63-1"/>
    <property type="protein sequence ID" value="ENSBTAP00000029564.2"/>
    <property type="gene ID" value="ENSBTAG00000018833.7"/>
</dbReference>
<dbReference type="GeneID" id="510256"/>
<dbReference type="KEGG" id="bta:510256"/>
<dbReference type="CTD" id="55530"/>
<dbReference type="VEuPathDB" id="HostDB:ENSBTAG00000018833"/>
<dbReference type="eggNOG" id="KOG0253">
    <property type="taxonomic scope" value="Eukaryota"/>
</dbReference>
<dbReference type="eggNOG" id="KOG0255">
    <property type="taxonomic scope" value="Eukaryota"/>
</dbReference>
<dbReference type="GeneTree" id="ENSGT00940000155403"/>
<dbReference type="HOGENOM" id="CLU_001265_46_0_1"/>
<dbReference type="InParanoid" id="Q1JP63"/>
<dbReference type="OMA" id="LLWFIWM"/>
<dbReference type="OrthoDB" id="4139357at2759"/>
<dbReference type="TreeFam" id="TF313465"/>
<dbReference type="Proteomes" id="UP000009136">
    <property type="component" value="Chromosome 17"/>
</dbReference>
<dbReference type="Bgee" id="ENSBTAG00000018833">
    <property type="expression patterns" value="Expressed in Ammon's horn and 63 other cell types or tissues"/>
</dbReference>
<dbReference type="GO" id="GO:0030672">
    <property type="term" value="C:synaptic vesicle membrane"/>
    <property type="evidence" value="ECO:0007669"/>
    <property type="project" value="UniProtKB-SubCell"/>
</dbReference>
<dbReference type="GO" id="GO:0022857">
    <property type="term" value="F:transmembrane transporter activity"/>
    <property type="evidence" value="ECO:0007669"/>
    <property type="project" value="InterPro"/>
</dbReference>
<dbReference type="CDD" id="cd17441">
    <property type="entry name" value="MFS_SVOP"/>
    <property type="match status" value="1"/>
</dbReference>
<dbReference type="FunFam" id="1.20.1250.20:FF:000084">
    <property type="entry name" value="Synaptic vesicle 2-related protein"/>
    <property type="match status" value="1"/>
</dbReference>
<dbReference type="Gene3D" id="1.20.1250.20">
    <property type="entry name" value="MFS general substrate transporter like domains"/>
    <property type="match status" value="1"/>
</dbReference>
<dbReference type="InterPro" id="IPR011701">
    <property type="entry name" value="MFS"/>
</dbReference>
<dbReference type="InterPro" id="IPR020846">
    <property type="entry name" value="MFS_dom"/>
</dbReference>
<dbReference type="InterPro" id="IPR005828">
    <property type="entry name" value="MFS_sugar_transport-like"/>
</dbReference>
<dbReference type="InterPro" id="IPR036259">
    <property type="entry name" value="MFS_trans_sf"/>
</dbReference>
<dbReference type="InterPro" id="IPR004749">
    <property type="entry name" value="Orgcat_transp/SVOP"/>
</dbReference>
<dbReference type="InterPro" id="IPR047969">
    <property type="entry name" value="SVOP-like_MFS_dom"/>
</dbReference>
<dbReference type="NCBIfam" id="TIGR00898">
    <property type="entry name" value="2A0119"/>
    <property type="match status" value="1"/>
</dbReference>
<dbReference type="PANTHER" id="PTHR23511:SF5">
    <property type="entry name" value="MAJOR FACILITATOR-TYPE TRANSPORTER HXNZ-RELATED"/>
    <property type="match status" value="1"/>
</dbReference>
<dbReference type="PANTHER" id="PTHR23511">
    <property type="entry name" value="SYNAPTIC VESICLE GLYCOPROTEIN 2"/>
    <property type="match status" value="1"/>
</dbReference>
<dbReference type="Pfam" id="PF07690">
    <property type="entry name" value="MFS_1"/>
    <property type="match status" value="1"/>
</dbReference>
<dbReference type="Pfam" id="PF00083">
    <property type="entry name" value="Sugar_tr"/>
    <property type="match status" value="1"/>
</dbReference>
<dbReference type="SUPFAM" id="SSF103473">
    <property type="entry name" value="MFS general substrate transporter"/>
    <property type="match status" value="1"/>
</dbReference>
<dbReference type="PROSITE" id="PS50850">
    <property type="entry name" value="MFS"/>
    <property type="match status" value="1"/>
</dbReference>